<sequence>MRPPGFWTRPPTHPLARLLAPVGRVYGGLTADRMDRPGAEPPYPVLCVGNFTLGGAGKTPTALALVRLLRDLGRTPALLSRGYGGRLAGPLVVDPARHAAAEVGDEPLLLAQAAPTIVARDRPSGARLCAASGADVIVMDDGLQNPSLTKSLSLAVVDGGVGLGNGLPFPAGPLRAPLARQWPHVAGLVLVGEGSPGEAMAAEAESRGLPVHRARLVPEAGSDWAGRRVVAFAGIGRPQKFFETLRSLGAEIVAEWAFPDHHPYRPGDWTALSALAAREGASLVTTEKDAVRLPAEARTAVAVLRVALAFADETRLRQQLAAAFPRA</sequence>
<accession>B7KT03</accession>
<feature type="chain" id="PRO_1000134743" description="Tetraacyldisaccharide 4'-kinase">
    <location>
        <begin position="1"/>
        <end position="327"/>
    </location>
</feature>
<feature type="binding site" evidence="1">
    <location>
        <begin position="52"/>
        <end position="59"/>
    </location>
    <ligand>
        <name>ATP</name>
        <dbReference type="ChEBI" id="CHEBI:30616"/>
    </ligand>
</feature>
<evidence type="ECO:0000255" key="1">
    <source>
        <dbReference type="HAMAP-Rule" id="MF_00409"/>
    </source>
</evidence>
<reference key="1">
    <citation type="submission" date="2008-12" db="EMBL/GenBank/DDBJ databases">
        <title>Complete sequence of chromosome of Methylobacterium chloromethanicum CM4.</title>
        <authorList>
            <consortium name="US DOE Joint Genome Institute"/>
            <person name="Lucas S."/>
            <person name="Copeland A."/>
            <person name="Lapidus A."/>
            <person name="Glavina del Rio T."/>
            <person name="Dalin E."/>
            <person name="Tice H."/>
            <person name="Bruce D."/>
            <person name="Goodwin L."/>
            <person name="Pitluck S."/>
            <person name="Chertkov O."/>
            <person name="Brettin T."/>
            <person name="Detter J.C."/>
            <person name="Han C."/>
            <person name="Larimer F."/>
            <person name="Land M."/>
            <person name="Hauser L."/>
            <person name="Kyrpides N."/>
            <person name="Mikhailova N."/>
            <person name="Marx C."/>
            <person name="Richardson P."/>
        </authorList>
    </citation>
    <scope>NUCLEOTIDE SEQUENCE [LARGE SCALE GENOMIC DNA]</scope>
    <source>
        <strain>CM4 / NCIMB 13688</strain>
    </source>
</reference>
<dbReference type="EC" id="2.7.1.130" evidence="1"/>
<dbReference type="EMBL" id="CP001298">
    <property type="protein sequence ID" value="ACK84033.1"/>
    <property type="molecule type" value="Genomic_DNA"/>
</dbReference>
<dbReference type="RefSeq" id="WP_015951375.1">
    <property type="nucleotide sequence ID" value="NC_011757.1"/>
</dbReference>
<dbReference type="SMR" id="B7KT03"/>
<dbReference type="KEGG" id="mch:Mchl_3195"/>
<dbReference type="HOGENOM" id="CLU_038816_0_0_5"/>
<dbReference type="UniPathway" id="UPA00359">
    <property type="reaction ID" value="UER00482"/>
</dbReference>
<dbReference type="Proteomes" id="UP000002385">
    <property type="component" value="Chromosome"/>
</dbReference>
<dbReference type="GO" id="GO:0005886">
    <property type="term" value="C:plasma membrane"/>
    <property type="evidence" value="ECO:0007669"/>
    <property type="project" value="TreeGrafter"/>
</dbReference>
<dbReference type="GO" id="GO:0005524">
    <property type="term" value="F:ATP binding"/>
    <property type="evidence" value="ECO:0007669"/>
    <property type="project" value="UniProtKB-UniRule"/>
</dbReference>
<dbReference type="GO" id="GO:0009029">
    <property type="term" value="F:tetraacyldisaccharide 4'-kinase activity"/>
    <property type="evidence" value="ECO:0007669"/>
    <property type="project" value="UniProtKB-UniRule"/>
</dbReference>
<dbReference type="GO" id="GO:0009245">
    <property type="term" value="P:lipid A biosynthetic process"/>
    <property type="evidence" value="ECO:0007669"/>
    <property type="project" value="UniProtKB-UniRule"/>
</dbReference>
<dbReference type="GO" id="GO:0009244">
    <property type="term" value="P:lipopolysaccharide core region biosynthetic process"/>
    <property type="evidence" value="ECO:0007669"/>
    <property type="project" value="TreeGrafter"/>
</dbReference>
<dbReference type="HAMAP" id="MF_00409">
    <property type="entry name" value="LpxK"/>
    <property type="match status" value="1"/>
</dbReference>
<dbReference type="InterPro" id="IPR003758">
    <property type="entry name" value="LpxK"/>
</dbReference>
<dbReference type="InterPro" id="IPR027417">
    <property type="entry name" value="P-loop_NTPase"/>
</dbReference>
<dbReference type="NCBIfam" id="TIGR00682">
    <property type="entry name" value="lpxK"/>
    <property type="match status" value="1"/>
</dbReference>
<dbReference type="PANTHER" id="PTHR42724">
    <property type="entry name" value="TETRAACYLDISACCHARIDE 4'-KINASE"/>
    <property type="match status" value="1"/>
</dbReference>
<dbReference type="PANTHER" id="PTHR42724:SF1">
    <property type="entry name" value="TETRAACYLDISACCHARIDE 4'-KINASE, MITOCHONDRIAL-RELATED"/>
    <property type="match status" value="1"/>
</dbReference>
<dbReference type="Pfam" id="PF02606">
    <property type="entry name" value="LpxK"/>
    <property type="match status" value="1"/>
</dbReference>
<dbReference type="SUPFAM" id="SSF52540">
    <property type="entry name" value="P-loop containing nucleoside triphosphate hydrolases"/>
    <property type="match status" value="1"/>
</dbReference>
<gene>
    <name evidence="1" type="primary">lpxK</name>
    <name type="ordered locus">Mchl_3195</name>
</gene>
<organism>
    <name type="scientific">Methylorubrum extorquens (strain CM4 / NCIMB 13688)</name>
    <name type="common">Methylobacterium extorquens</name>
    <dbReference type="NCBI Taxonomy" id="440085"/>
    <lineage>
        <taxon>Bacteria</taxon>
        <taxon>Pseudomonadati</taxon>
        <taxon>Pseudomonadota</taxon>
        <taxon>Alphaproteobacteria</taxon>
        <taxon>Hyphomicrobiales</taxon>
        <taxon>Methylobacteriaceae</taxon>
        <taxon>Methylorubrum</taxon>
    </lineage>
</organism>
<name>LPXK_METC4</name>
<keyword id="KW-0067">ATP-binding</keyword>
<keyword id="KW-0418">Kinase</keyword>
<keyword id="KW-0441">Lipid A biosynthesis</keyword>
<keyword id="KW-0444">Lipid biosynthesis</keyword>
<keyword id="KW-0443">Lipid metabolism</keyword>
<keyword id="KW-0547">Nucleotide-binding</keyword>
<keyword id="KW-0808">Transferase</keyword>
<comment type="function">
    <text evidence="1">Transfers the gamma-phosphate of ATP to the 4'-position of a tetraacyldisaccharide 1-phosphate intermediate (termed DS-1-P) to form tetraacyldisaccharide 1,4'-bis-phosphate (lipid IVA).</text>
</comment>
<comment type="catalytic activity">
    <reaction evidence="1">
        <text>a lipid A disaccharide + ATP = a lipid IVA + ADP + H(+)</text>
        <dbReference type="Rhea" id="RHEA:67840"/>
        <dbReference type="ChEBI" id="CHEBI:15378"/>
        <dbReference type="ChEBI" id="CHEBI:30616"/>
        <dbReference type="ChEBI" id="CHEBI:176343"/>
        <dbReference type="ChEBI" id="CHEBI:176425"/>
        <dbReference type="ChEBI" id="CHEBI:456216"/>
        <dbReference type="EC" id="2.7.1.130"/>
    </reaction>
</comment>
<comment type="pathway">
    <text evidence="1">Glycolipid biosynthesis; lipid IV(A) biosynthesis; lipid IV(A) from (3R)-3-hydroxytetradecanoyl-[acyl-carrier-protein] and UDP-N-acetyl-alpha-D-glucosamine: step 6/6.</text>
</comment>
<comment type="similarity">
    <text evidence="1">Belongs to the LpxK family.</text>
</comment>
<proteinExistence type="inferred from homology"/>
<protein>
    <recommendedName>
        <fullName evidence="1">Tetraacyldisaccharide 4'-kinase</fullName>
        <ecNumber evidence="1">2.7.1.130</ecNumber>
    </recommendedName>
    <alternativeName>
        <fullName evidence="1">Lipid A 4'-kinase</fullName>
    </alternativeName>
</protein>